<gene>
    <name evidence="2" type="primary">pyrR</name>
    <name type="ordered locus">FN0418</name>
</gene>
<accession>Q8RG90</accession>
<proteinExistence type="inferred from homology"/>
<feature type="chain" id="PRO_0000183036" description="Bifunctional protein PyrR">
    <location>
        <begin position="1"/>
        <end position="177"/>
    </location>
</feature>
<feature type="short sequence motif" description="PRPP-binding" evidence="2">
    <location>
        <begin position="100"/>
        <end position="112"/>
    </location>
</feature>
<feature type="binding site" evidence="1">
    <location>
        <begin position="42"/>
        <end position="43"/>
    </location>
    <ligand>
        <name>substrate</name>
    </ligand>
</feature>
<feature type="binding site" evidence="1">
    <location>
        <begin position="104"/>
        <end position="112"/>
    </location>
    <ligand>
        <name>substrate</name>
    </ligand>
</feature>
<feature type="binding site" evidence="1">
    <location>
        <position position="137"/>
    </location>
    <ligand>
        <name>substrate</name>
    </ligand>
</feature>
<evidence type="ECO:0000250" key="1"/>
<evidence type="ECO:0000255" key="2">
    <source>
        <dbReference type="HAMAP-Rule" id="MF_01219"/>
    </source>
</evidence>
<dbReference type="EC" id="2.4.2.9" evidence="2"/>
<dbReference type="EMBL" id="AE009951">
    <property type="protein sequence ID" value="AAL94621.1"/>
    <property type="molecule type" value="Genomic_DNA"/>
</dbReference>
<dbReference type="RefSeq" id="NP_603322.1">
    <property type="nucleotide sequence ID" value="NC_003454.1"/>
</dbReference>
<dbReference type="SMR" id="Q8RG90"/>
<dbReference type="FunCoup" id="Q8RG90">
    <property type="interactions" value="153"/>
</dbReference>
<dbReference type="STRING" id="190304.FN0418"/>
<dbReference type="PaxDb" id="190304-FN0418"/>
<dbReference type="EnsemblBacteria" id="AAL94621">
    <property type="protein sequence ID" value="AAL94621"/>
    <property type="gene ID" value="FN0418"/>
</dbReference>
<dbReference type="KEGG" id="fnu:FN0418"/>
<dbReference type="PATRIC" id="fig|190304.8.peg.995"/>
<dbReference type="eggNOG" id="COG2065">
    <property type="taxonomic scope" value="Bacteria"/>
</dbReference>
<dbReference type="HOGENOM" id="CLU_094234_2_1_0"/>
<dbReference type="InParanoid" id="Q8RG90"/>
<dbReference type="BioCyc" id="FNUC190304:G1FZS-1012-MONOMER"/>
<dbReference type="Proteomes" id="UP000002521">
    <property type="component" value="Chromosome"/>
</dbReference>
<dbReference type="GO" id="GO:0004845">
    <property type="term" value="F:uracil phosphoribosyltransferase activity"/>
    <property type="evidence" value="ECO:0007669"/>
    <property type="project" value="UniProtKB-UniRule"/>
</dbReference>
<dbReference type="GO" id="GO:0006355">
    <property type="term" value="P:regulation of DNA-templated transcription"/>
    <property type="evidence" value="ECO:0007669"/>
    <property type="project" value="UniProtKB-UniRule"/>
</dbReference>
<dbReference type="CDD" id="cd06223">
    <property type="entry name" value="PRTases_typeI"/>
    <property type="match status" value="1"/>
</dbReference>
<dbReference type="FunFam" id="3.40.50.2020:FF:000020">
    <property type="entry name" value="Bifunctional protein PyrR"/>
    <property type="match status" value="1"/>
</dbReference>
<dbReference type="Gene3D" id="3.40.50.2020">
    <property type="match status" value="1"/>
</dbReference>
<dbReference type="HAMAP" id="MF_01219">
    <property type="entry name" value="PyrR"/>
    <property type="match status" value="1"/>
</dbReference>
<dbReference type="InterPro" id="IPR000836">
    <property type="entry name" value="PRibTrfase_dom"/>
</dbReference>
<dbReference type="InterPro" id="IPR029057">
    <property type="entry name" value="PRTase-like"/>
</dbReference>
<dbReference type="InterPro" id="IPR023050">
    <property type="entry name" value="PyrR"/>
</dbReference>
<dbReference type="InterPro" id="IPR050137">
    <property type="entry name" value="PyrR_bifunctional"/>
</dbReference>
<dbReference type="NCBIfam" id="NF003548">
    <property type="entry name" value="PRK05205.1-4"/>
    <property type="match status" value="1"/>
</dbReference>
<dbReference type="NCBIfam" id="NF003549">
    <property type="entry name" value="PRK05205.1-5"/>
    <property type="match status" value="1"/>
</dbReference>
<dbReference type="PANTHER" id="PTHR11608">
    <property type="entry name" value="BIFUNCTIONAL PROTEIN PYRR"/>
    <property type="match status" value="1"/>
</dbReference>
<dbReference type="PANTHER" id="PTHR11608:SF0">
    <property type="entry name" value="BIFUNCTIONAL PROTEIN PYRR"/>
    <property type="match status" value="1"/>
</dbReference>
<dbReference type="Pfam" id="PF00156">
    <property type="entry name" value="Pribosyltran"/>
    <property type="match status" value="1"/>
</dbReference>
<dbReference type="SUPFAM" id="SSF53271">
    <property type="entry name" value="PRTase-like"/>
    <property type="match status" value="1"/>
</dbReference>
<reference key="1">
    <citation type="journal article" date="2002" name="J. Bacteriol.">
        <title>Genome sequence and analysis of the oral bacterium Fusobacterium nucleatum strain ATCC 25586.</title>
        <authorList>
            <person name="Kapatral V."/>
            <person name="Anderson I."/>
            <person name="Ivanova N."/>
            <person name="Reznik G."/>
            <person name="Los T."/>
            <person name="Lykidis A."/>
            <person name="Bhattacharyya A."/>
            <person name="Bartman A."/>
            <person name="Gardner W."/>
            <person name="Grechkin G."/>
            <person name="Zhu L."/>
            <person name="Vasieva O."/>
            <person name="Chu L."/>
            <person name="Kogan Y."/>
            <person name="Chaga O."/>
            <person name="Goltsman E."/>
            <person name="Bernal A."/>
            <person name="Larsen N."/>
            <person name="D'Souza M."/>
            <person name="Walunas T."/>
            <person name="Pusch G."/>
            <person name="Haselkorn R."/>
            <person name="Fonstein M."/>
            <person name="Kyrpides N.C."/>
            <person name="Overbeek R."/>
        </authorList>
    </citation>
    <scope>NUCLEOTIDE SEQUENCE [LARGE SCALE GENOMIC DNA]</scope>
    <source>
        <strain>ATCC 25586 / DSM 15643 / BCRC 10681 / CIP 101130 / JCM 8532 / KCTC 2640 / LMG 13131 / VPI 4355</strain>
    </source>
</reference>
<keyword id="KW-0328">Glycosyltransferase</keyword>
<keyword id="KW-1185">Reference proteome</keyword>
<keyword id="KW-0804">Transcription</keyword>
<keyword id="KW-0805">Transcription regulation</keyword>
<keyword id="KW-0808">Transferase</keyword>
<comment type="function">
    <text evidence="2">Regulates the transcription of the pyrimidine nucleotide (pyr) operon in response to exogenous pyrimidines.</text>
</comment>
<comment type="function">
    <text evidence="2">Also displays a weak uracil phosphoribosyltransferase activity which is not physiologically significant.</text>
</comment>
<comment type="catalytic activity">
    <reaction evidence="2">
        <text>UMP + diphosphate = 5-phospho-alpha-D-ribose 1-diphosphate + uracil</text>
        <dbReference type="Rhea" id="RHEA:13017"/>
        <dbReference type="ChEBI" id="CHEBI:17568"/>
        <dbReference type="ChEBI" id="CHEBI:33019"/>
        <dbReference type="ChEBI" id="CHEBI:57865"/>
        <dbReference type="ChEBI" id="CHEBI:58017"/>
        <dbReference type="EC" id="2.4.2.9"/>
    </reaction>
</comment>
<comment type="similarity">
    <text evidence="2">Belongs to the purine/pyrimidine phosphoribosyltransferase family. PyrR subfamily.</text>
</comment>
<protein>
    <recommendedName>
        <fullName evidence="2">Bifunctional protein PyrR</fullName>
    </recommendedName>
    <domain>
        <recommendedName>
            <fullName evidence="2">Pyrimidine operon regulatory protein</fullName>
        </recommendedName>
    </domain>
    <domain>
        <recommendedName>
            <fullName evidence="2">Uracil phosphoribosyltransferase</fullName>
            <shortName evidence="2">UPRTase</shortName>
            <ecNumber evidence="2">2.4.2.9</ecNumber>
        </recommendedName>
    </domain>
</protein>
<organism>
    <name type="scientific">Fusobacterium nucleatum subsp. nucleatum (strain ATCC 25586 / DSM 15643 / BCRC 10681 / CIP 101130 / JCM 8532 / KCTC 2640 / LMG 13131 / VPI 4355)</name>
    <dbReference type="NCBI Taxonomy" id="190304"/>
    <lineage>
        <taxon>Bacteria</taxon>
        <taxon>Fusobacteriati</taxon>
        <taxon>Fusobacteriota</taxon>
        <taxon>Fusobacteriia</taxon>
        <taxon>Fusobacteriales</taxon>
        <taxon>Fusobacteriaceae</taxon>
        <taxon>Fusobacterium</taxon>
    </lineage>
</organism>
<sequence>MEVKMKILLDEDGIRRSITRISYEIIERNKTVDNIVLVGIKSRGDILAERIKQKLLEVENIDAPLETIDITYYRDDIDRKNFDLDIKDTEFKTNLTGKVVVIVDDVLYTGRTIRAGLDAILSKSRPAKIQLACLIDRGHRELPIRADFIGKNIPTSHSENIEVYLKELDGKEEVVIL</sequence>
<name>PYRR_FUSNN</name>